<dbReference type="EC" id="7.1.1.-" evidence="1"/>
<dbReference type="EMBL" id="CP000553">
    <property type="protein sequence ID" value="ABM74786.1"/>
    <property type="molecule type" value="Genomic_DNA"/>
</dbReference>
<dbReference type="RefSeq" id="WP_011823010.1">
    <property type="nucleotide sequence ID" value="NC_008819.1"/>
</dbReference>
<dbReference type="SMR" id="A2BZX6"/>
<dbReference type="KEGG" id="pme:NATL1_02221"/>
<dbReference type="eggNOG" id="COG1008">
    <property type="taxonomic scope" value="Bacteria"/>
</dbReference>
<dbReference type="HOGENOM" id="CLU_007100_4_0_3"/>
<dbReference type="Proteomes" id="UP000002592">
    <property type="component" value="Chromosome"/>
</dbReference>
<dbReference type="GO" id="GO:0031676">
    <property type="term" value="C:plasma membrane-derived thylakoid membrane"/>
    <property type="evidence" value="ECO:0007669"/>
    <property type="project" value="UniProtKB-SubCell"/>
</dbReference>
<dbReference type="GO" id="GO:0008137">
    <property type="term" value="F:NADH dehydrogenase (ubiquinone) activity"/>
    <property type="evidence" value="ECO:0007669"/>
    <property type="project" value="InterPro"/>
</dbReference>
<dbReference type="GO" id="GO:0048039">
    <property type="term" value="F:ubiquinone binding"/>
    <property type="evidence" value="ECO:0007669"/>
    <property type="project" value="TreeGrafter"/>
</dbReference>
<dbReference type="GO" id="GO:0042773">
    <property type="term" value="P:ATP synthesis coupled electron transport"/>
    <property type="evidence" value="ECO:0007669"/>
    <property type="project" value="InterPro"/>
</dbReference>
<dbReference type="GO" id="GO:0015990">
    <property type="term" value="P:electron transport coupled proton transport"/>
    <property type="evidence" value="ECO:0007669"/>
    <property type="project" value="TreeGrafter"/>
</dbReference>
<dbReference type="HAMAP" id="MF_00491">
    <property type="entry name" value="NDH1_NuoM"/>
    <property type="match status" value="1"/>
</dbReference>
<dbReference type="InterPro" id="IPR022997">
    <property type="entry name" value="NADH_Q_OxRdtase_chain4"/>
</dbReference>
<dbReference type="InterPro" id="IPR010227">
    <property type="entry name" value="NADH_Q_OxRdtase_chainM/4"/>
</dbReference>
<dbReference type="InterPro" id="IPR003918">
    <property type="entry name" value="NADH_UbQ_OxRdtase"/>
</dbReference>
<dbReference type="InterPro" id="IPR001750">
    <property type="entry name" value="ND/Mrp_TM"/>
</dbReference>
<dbReference type="NCBIfam" id="TIGR01972">
    <property type="entry name" value="NDH_I_M"/>
    <property type="match status" value="1"/>
</dbReference>
<dbReference type="NCBIfam" id="NF002713">
    <property type="entry name" value="PRK02546.1"/>
    <property type="match status" value="1"/>
</dbReference>
<dbReference type="NCBIfam" id="NF009212">
    <property type="entry name" value="PRK12561.1"/>
    <property type="match status" value="1"/>
</dbReference>
<dbReference type="PANTHER" id="PTHR43507:SF21">
    <property type="entry name" value="NAD(P)H-QUINONE OXIDOREDUCTASE CHAIN 4, CHLOROPLASTIC"/>
    <property type="match status" value="1"/>
</dbReference>
<dbReference type="PANTHER" id="PTHR43507">
    <property type="entry name" value="NADH-UBIQUINONE OXIDOREDUCTASE CHAIN 4"/>
    <property type="match status" value="1"/>
</dbReference>
<dbReference type="Pfam" id="PF00361">
    <property type="entry name" value="Proton_antipo_M"/>
    <property type="match status" value="1"/>
</dbReference>
<dbReference type="PRINTS" id="PR01437">
    <property type="entry name" value="NUOXDRDTASE4"/>
</dbReference>
<reference key="1">
    <citation type="journal article" date="2007" name="PLoS Genet.">
        <title>Patterns and implications of gene gain and loss in the evolution of Prochlorococcus.</title>
        <authorList>
            <person name="Kettler G.C."/>
            <person name="Martiny A.C."/>
            <person name="Huang K."/>
            <person name="Zucker J."/>
            <person name="Coleman M.L."/>
            <person name="Rodrigue S."/>
            <person name="Chen F."/>
            <person name="Lapidus A."/>
            <person name="Ferriera S."/>
            <person name="Johnson J."/>
            <person name="Steglich C."/>
            <person name="Church G.M."/>
            <person name="Richardson P."/>
            <person name="Chisholm S.W."/>
        </authorList>
    </citation>
    <scope>NUCLEOTIDE SEQUENCE [LARGE SCALE GENOMIC DNA]</scope>
    <source>
        <strain>NATL1A</strain>
    </source>
</reference>
<gene>
    <name evidence="1" type="primary">ndhD</name>
    <name type="ordered locus">NATL1_02221</name>
</gene>
<protein>
    <recommendedName>
        <fullName evidence="1">NAD(P)H-quinone oxidoreductase chain 4</fullName>
        <ecNumber evidence="1">7.1.1.-</ecNumber>
    </recommendedName>
    <alternativeName>
        <fullName evidence="1">NAD(P)H dehydrogenase I, chain 4</fullName>
    </alternativeName>
    <alternativeName>
        <fullName evidence="1">NDH-1, chain 4</fullName>
    </alternativeName>
</protein>
<comment type="function">
    <text evidence="1">NDH-1 shuttles electrons from NAD(P)H, via FMN and iron-sulfur (Fe-S) centers, to quinones in the respiratory chain. The immediate electron acceptor for the enzyme in this species is believed to be plastoquinone. Couples the redox reaction to proton translocation (for every two electrons transferred, four hydrogen ions are translocated across the cytoplasmic membrane), and thus conserves the redox energy in a proton gradient.</text>
</comment>
<comment type="catalytic activity">
    <reaction evidence="1">
        <text>a plastoquinone + NADH + (n+1) H(+)(in) = a plastoquinol + NAD(+) + n H(+)(out)</text>
        <dbReference type="Rhea" id="RHEA:42608"/>
        <dbReference type="Rhea" id="RHEA-COMP:9561"/>
        <dbReference type="Rhea" id="RHEA-COMP:9562"/>
        <dbReference type="ChEBI" id="CHEBI:15378"/>
        <dbReference type="ChEBI" id="CHEBI:17757"/>
        <dbReference type="ChEBI" id="CHEBI:57540"/>
        <dbReference type="ChEBI" id="CHEBI:57945"/>
        <dbReference type="ChEBI" id="CHEBI:62192"/>
    </reaction>
</comment>
<comment type="catalytic activity">
    <reaction evidence="1">
        <text>a plastoquinone + NADPH + (n+1) H(+)(in) = a plastoquinol + NADP(+) + n H(+)(out)</text>
        <dbReference type="Rhea" id="RHEA:42612"/>
        <dbReference type="Rhea" id="RHEA-COMP:9561"/>
        <dbReference type="Rhea" id="RHEA-COMP:9562"/>
        <dbReference type="ChEBI" id="CHEBI:15378"/>
        <dbReference type="ChEBI" id="CHEBI:17757"/>
        <dbReference type="ChEBI" id="CHEBI:57783"/>
        <dbReference type="ChEBI" id="CHEBI:58349"/>
        <dbReference type="ChEBI" id="CHEBI:62192"/>
    </reaction>
</comment>
<comment type="subcellular location">
    <subcellularLocation>
        <location evidence="1">Cellular thylakoid membrane</location>
        <topology evidence="1">Multi-pass membrane protein</topology>
    </subcellularLocation>
</comment>
<comment type="similarity">
    <text evidence="1">Belongs to the complex I subunit 4 family.</text>
</comment>
<accession>A2BZX6</accession>
<organism>
    <name type="scientific">Prochlorococcus marinus (strain NATL1A)</name>
    <dbReference type="NCBI Taxonomy" id="167555"/>
    <lineage>
        <taxon>Bacteria</taxon>
        <taxon>Bacillati</taxon>
        <taxon>Cyanobacteriota</taxon>
        <taxon>Cyanophyceae</taxon>
        <taxon>Synechococcales</taxon>
        <taxon>Prochlorococcaceae</taxon>
        <taxon>Prochlorococcus</taxon>
    </lineage>
</organism>
<sequence length="538" mass="58755">MLIPEPIQADFPWLSLSILFPIVGALIVPFIPDKGEGKEVRWYALIISLITFLITVAAYFKGFDPSLEGLQLYEKVSWLPDLGLTWSVGADGLSMPLILLTSFITSLAVLAAWPVSYKPKLFFFLILAMDGGQIAVFAVQDMLLFFLAWELELFPVYLFLAIWGGKKRQYAATKFIIYTAGSSLFILLAGLAMGFFQGGGVPDFGYTHLAQQNFGRGFQLLCYSGLLIAFGVKLPIVPLHTWLPDAHGEATAPVHMLLAGILLKMGGYALLRFNAQLLPDAHAQFAPLLIVLGVVNIIYAALTSFAQRNLKRKIAYSSISHMGFVLIGIGSFSSLGTSGAMLQMVSHGLIGASLFFLVGATYDRTHTLQLDEMGGIGQNMRIMFALWTACAFASLALPGMSGFISELMVFVGFVTDEVYTLPFRIVVASLAAIGVILTPIYLLSMLREIFFGKENAKLISKAKLVDAEPREIYIIACLLVPIIGIGLYPKIMTDTYISSIDGLVKRDLLAVERIRSDRATIMSNTSLSIGTIEAPLLD</sequence>
<name>NU4C_PROM1</name>
<keyword id="KW-0472">Membrane</keyword>
<keyword id="KW-0520">NAD</keyword>
<keyword id="KW-0521">NADP</keyword>
<keyword id="KW-0618">Plastoquinone</keyword>
<keyword id="KW-0874">Quinone</keyword>
<keyword id="KW-0793">Thylakoid</keyword>
<keyword id="KW-1278">Translocase</keyword>
<keyword id="KW-0812">Transmembrane</keyword>
<keyword id="KW-1133">Transmembrane helix</keyword>
<proteinExistence type="inferred from homology"/>
<feature type="chain" id="PRO_0000343242" description="NAD(P)H-quinone oxidoreductase chain 4">
    <location>
        <begin position="1"/>
        <end position="538"/>
    </location>
</feature>
<feature type="transmembrane region" description="Helical" evidence="1">
    <location>
        <begin position="11"/>
        <end position="31"/>
    </location>
</feature>
<feature type="transmembrane region" description="Helical" evidence="1">
    <location>
        <begin position="43"/>
        <end position="63"/>
    </location>
</feature>
<feature type="transmembrane region" description="Helical" evidence="1">
    <location>
        <begin position="95"/>
        <end position="115"/>
    </location>
</feature>
<feature type="transmembrane region" description="Helical" evidence="1">
    <location>
        <begin position="119"/>
        <end position="139"/>
    </location>
</feature>
<feature type="transmembrane region" description="Helical" evidence="1">
    <location>
        <begin position="143"/>
        <end position="163"/>
    </location>
</feature>
<feature type="transmembrane region" description="Helical" evidence="1">
    <location>
        <begin position="175"/>
        <end position="195"/>
    </location>
</feature>
<feature type="transmembrane region" description="Helical" evidence="1">
    <location>
        <begin position="217"/>
        <end position="237"/>
    </location>
</feature>
<feature type="transmembrane region" description="Helical" evidence="1">
    <location>
        <begin position="251"/>
        <end position="271"/>
    </location>
</feature>
<feature type="transmembrane region" description="Helical" evidence="1">
    <location>
        <begin position="285"/>
        <end position="305"/>
    </location>
</feature>
<feature type="transmembrane region" description="Helical" evidence="1">
    <location>
        <begin position="314"/>
        <end position="334"/>
    </location>
</feature>
<feature type="transmembrane region" description="Helical" evidence="1">
    <location>
        <begin position="340"/>
        <end position="360"/>
    </location>
</feature>
<feature type="transmembrane region" description="Helical" evidence="1">
    <location>
        <begin position="382"/>
        <end position="404"/>
    </location>
</feature>
<feature type="transmembrane region" description="Helical" evidence="1">
    <location>
        <begin position="425"/>
        <end position="445"/>
    </location>
</feature>
<feature type="transmembrane region" description="Helical" evidence="1">
    <location>
        <begin position="472"/>
        <end position="492"/>
    </location>
</feature>
<evidence type="ECO:0000255" key="1">
    <source>
        <dbReference type="HAMAP-Rule" id="MF_00491"/>
    </source>
</evidence>